<protein>
    <recommendedName>
        <fullName evidence="1">Major outer membrane lipoprotein Lpp 1</fullName>
    </recommendedName>
    <alternativeName>
        <fullName evidence="1">Braun lipoprotein 1</fullName>
        <shortName evidence="1">BLP 1</shortName>
    </alternativeName>
    <alternativeName>
        <fullName evidence="1">Murein lipoprotein 1</fullName>
    </alternativeName>
</protein>
<gene>
    <name evidence="1" type="primary">lpp1</name>
    <name type="ordered locus">STM474_1381</name>
</gene>
<evidence type="ECO:0000255" key="1">
    <source>
        <dbReference type="HAMAP-Rule" id="MF_00843"/>
    </source>
</evidence>
<evidence type="ECO:0000256" key="2">
    <source>
        <dbReference type="SAM" id="MobiDB-lite"/>
    </source>
</evidence>
<evidence type="ECO:0000269" key="3">
    <source>
    </source>
</evidence>
<feature type="signal peptide" evidence="1">
    <location>
        <begin position="1"/>
        <end position="20"/>
    </location>
</feature>
<feature type="chain" id="PRO_0000447610" description="Major outer membrane lipoprotein Lpp 1" evidence="1">
    <location>
        <begin position="21"/>
        <end position="78"/>
    </location>
</feature>
<feature type="repeat" evidence="1">
    <location>
        <begin position="24"/>
        <end position="34"/>
    </location>
</feature>
<feature type="repeat" evidence="1">
    <location>
        <begin position="38"/>
        <end position="48"/>
    </location>
</feature>
<feature type="region of interest" description="Disordered" evidence="2">
    <location>
        <begin position="56"/>
        <end position="78"/>
    </location>
</feature>
<feature type="coiled-coil region" evidence="1">
    <location>
        <begin position="27"/>
        <end position="75"/>
    </location>
</feature>
<feature type="compositionally biased region" description="Polar residues" evidence="2">
    <location>
        <begin position="68"/>
        <end position="78"/>
    </location>
</feature>
<feature type="modified residue" description="N6-murein peptidoglycan lysine" evidence="1">
    <location>
        <position position="78"/>
    </location>
</feature>
<feature type="lipid moiety-binding region" description="N-palmitoyl cysteine" evidence="1">
    <location>
        <position position="21"/>
    </location>
</feature>
<feature type="lipid moiety-binding region" description="S-diacylglycerol cysteine" evidence="1">
    <location>
        <position position="21"/>
    </location>
</feature>
<reference key="1">
    <citation type="journal article" date="2011" name="J. Bacteriol.">
        <title>Genome sequences of Salmonella enterica serovar typhimurium, Choleraesuis, Dublin, and Gallinarum strains of well- defined virulence in food-producing animals.</title>
        <authorList>
            <person name="Richardson E.J."/>
            <person name="Limaye B."/>
            <person name="Inamdar H."/>
            <person name="Datta A."/>
            <person name="Manjari K.S."/>
            <person name="Pullinger G.D."/>
            <person name="Thomson N.R."/>
            <person name="Joshi R.R."/>
            <person name="Watson M."/>
            <person name="Stevens M.P."/>
        </authorList>
    </citation>
    <scope>NUCLEOTIDE SEQUENCE [LARGE SCALE GENOMIC DNA]</scope>
    <source>
        <strain>4/74</strain>
    </source>
</reference>
<reference key="2">
    <citation type="journal article" date="2013" name="Cell Host Microbe">
        <title>An infection-relevant transcriptomic compendium for Salmonella enterica Serovar Typhimurium.</title>
        <authorList>
            <person name="Kroeger C."/>
            <person name="Colgan A."/>
            <person name="Srikumar S."/>
            <person name="Haendler K."/>
            <person name="Sivasankaran S.K."/>
            <person name="Hammarloef D.L."/>
            <person name="Canals R."/>
            <person name="Grissom J.E."/>
            <person name="Conway T."/>
            <person name="Hokamp K."/>
            <person name="Hinton J.C."/>
        </authorList>
    </citation>
    <scope>INDUCTION</scope>
    <source>
        <strain>4/74</strain>
    </source>
</reference>
<dbReference type="EMBL" id="CP002487">
    <property type="protein sequence ID" value="ADX17077.1"/>
    <property type="molecule type" value="Genomic_DNA"/>
</dbReference>
<dbReference type="SMR" id="E8XH70"/>
<dbReference type="KEGG" id="seb:STM474_1381"/>
<dbReference type="PATRIC" id="fig|909946.3.peg.1418"/>
<dbReference type="HOGENOM" id="CLU_166934_2_1_6"/>
<dbReference type="Proteomes" id="UP000008978">
    <property type="component" value="Chromosome"/>
</dbReference>
<dbReference type="GO" id="GO:0009279">
    <property type="term" value="C:cell outer membrane"/>
    <property type="evidence" value="ECO:0007669"/>
    <property type="project" value="UniProtKB-SubCell"/>
</dbReference>
<dbReference type="GO" id="GO:0005576">
    <property type="term" value="C:extracellular region"/>
    <property type="evidence" value="ECO:0007669"/>
    <property type="project" value="UniProtKB-KW"/>
</dbReference>
<dbReference type="GO" id="GO:0008289">
    <property type="term" value="F:lipid binding"/>
    <property type="evidence" value="ECO:0007669"/>
    <property type="project" value="UniProtKB-UniRule"/>
</dbReference>
<dbReference type="GO" id="GO:0042834">
    <property type="term" value="F:peptidoglycan binding"/>
    <property type="evidence" value="ECO:0007669"/>
    <property type="project" value="UniProtKB-UniRule"/>
</dbReference>
<dbReference type="GO" id="GO:0030258">
    <property type="term" value="P:lipid modification"/>
    <property type="evidence" value="ECO:0007669"/>
    <property type="project" value="UniProtKB-UniRule"/>
</dbReference>
<dbReference type="GO" id="GO:0043580">
    <property type="term" value="P:periplasmic space organization"/>
    <property type="evidence" value="ECO:0007669"/>
    <property type="project" value="UniProtKB-UniRule"/>
</dbReference>
<dbReference type="FunFam" id="1.20.5.190:FF:000002">
    <property type="entry name" value="Major outer membrane lipoprotein"/>
    <property type="match status" value="1"/>
</dbReference>
<dbReference type="Gene3D" id="1.20.5.190">
    <property type="match status" value="1"/>
</dbReference>
<dbReference type="HAMAP" id="MF_00843">
    <property type="entry name" value="Lpp"/>
    <property type="match status" value="1"/>
</dbReference>
<dbReference type="InterPro" id="IPR006817">
    <property type="entry name" value="Lipoprotein_leucine-zipper_dom"/>
</dbReference>
<dbReference type="InterPro" id="IPR016367">
    <property type="entry name" value="MOM_Lpp"/>
</dbReference>
<dbReference type="NCBIfam" id="NF040598">
    <property type="entry name" value="Ala_zip_lipo"/>
    <property type="match status" value="1"/>
</dbReference>
<dbReference type="NCBIfam" id="NF011925">
    <property type="entry name" value="PRK15396.1"/>
    <property type="match status" value="1"/>
</dbReference>
<dbReference type="PANTHER" id="PTHR38763:SF1">
    <property type="entry name" value="MAJOR OUTER MEMBRANE LIPOPROTEIN LPP"/>
    <property type="match status" value="1"/>
</dbReference>
<dbReference type="PANTHER" id="PTHR38763">
    <property type="entry name" value="MAJOR OUTER MEMBRANE PROLIPOPROTEIN LPP"/>
    <property type="match status" value="1"/>
</dbReference>
<dbReference type="Pfam" id="PF04728">
    <property type="entry name" value="LPP"/>
    <property type="match status" value="1"/>
</dbReference>
<dbReference type="PIRSF" id="PIRSF002855">
    <property type="entry name" value="Murein-lipoprotein"/>
    <property type="match status" value="1"/>
</dbReference>
<dbReference type="SUPFAM" id="SSF58042">
    <property type="entry name" value="Outer membrane lipoprotein"/>
    <property type="match status" value="1"/>
</dbReference>
<dbReference type="PROSITE" id="PS51257">
    <property type="entry name" value="PROKAR_LIPOPROTEIN"/>
    <property type="match status" value="1"/>
</dbReference>
<keyword id="KW-0998">Cell outer membrane</keyword>
<keyword id="KW-0134">Cell wall</keyword>
<keyword id="KW-0175">Coiled coil</keyword>
<keyword id="KW-0449">Lipoprotein</keyword>
<keyword id="KW-0472">Membrane</keyword>
<keyword id="KW-0564">Palmitate</keyword>
<keyword id="KW-0572">Peptidoglycan-anchor</keyword>
<keyword id="KW-0677">Repeat</keyword>
<keyword id="KW-0964">Secreted</keyword>
<keyword id="KW-0732">Signal</keyword>
<proteinExistence type="evidence at transcript level"/>
<accession>E8XH70</accession>
<organism>
    <name type="scientific">Salmonella typhimurium (strain 4/74)</name>
    <dbReference type="NCBI Taxonomy" id="909946"/>
    <lineage>
        <taxon>Bacteria</taxon>
        <taxon>Pseudomonadati</taxon>
        <taxon>Pseudomonadota</taxon>
        <taxon>Gammaproteobacteria</taxon>
        <taxon>Enterobacterales</taxon>
        <taxon>Enterobacteriaceae</taxon>
        <taxon>Salmonella</taxon>
    </lineage>
</organism>
<name>LPP1_SALT4</name>
<sequence>MNRTKLVLGAVILGSTLLAGCSSNAKIDQLSSDVQTLNAKVDQLSNDVNAMRSDVQAAKDDAARANQRLDNQATKYRK</sequence>
<comment type="function">
    <text evidence="1">A highly abundant outer membrane lipoprotein that controls the distance between the inner and outer membranes. The only protein known to be covalently linked to the peptidoglycan network (PGN). Also non-covalently binds the PGN. The link between the cell outer membrane and PGN contributes to maintenance of the structural and functional integrity of the cell envelope, and maintains the correct distance between the PGN and the outer membrane.</text>
</comment>
<comment type="subunit">
    <text evidence="1">Homotrimer.</text>
</comment>
<comment type="subcellular location">
    <subcellularLocation>
        <location evidence="1">Cell outer membrane</location>
        <topology evidence="1">Lipid-anchor</topology>
        <orientation evidence="1">Periplasmic side</orientation>
    </subcellularLocation>
    <subcellularLocation>
        <location evidence="1">Secreted</location>
        <location evidence="1">Cell wall</location>
        <topology evidence="1">Peptidoglycan-anchor</topology>
    </subcellularLocation>
    <text evidence="1">Attached via its lipidated N-terminus to the inner leaflet of the outer membrane. Attached to the peptidoglycan network (PGN) via its C-terminus.</text>
</comment>
<comment type="induction">
    <text evidence="3">Constitively expressed under many tested conditions.</text>
</comment>
<comment type="similarity">
    <text evidence="1">Belongs to the Lpp family.</text>
</comment>